<reference key="1">
    <citation type="journal article" date="2002" name="Mol. Microbiol.">
        <title>Genome sequence of Streptococcus agalactiae, a pathogen causing invasive neonatal disease.</title>
        <authorList>
            <person name="Glaser P."/>
            <person name="Rusniok C."/>
            <person name="Buchrieser C."/>
            <person name="Chevalier F."/>
            <person name="Frangeul L."/>
            <person name="Msadek T."/>
            <person name="Zouine M."/>
            <person name="Couve E."/>
            <person name="Lalioui L."/>
            <person name="Poyart C."/>
            <person name="Trieu-Cuot P."/>
            <person name="Kunst F."/>
        </authorList>
    </citation>
    <scope>NUCLEOTIDE SEQUENCE [LARGE SCALE GENOMIC DNA]</scope>
    <source>
        <strain>NEM316</strain>
    </source>
</reference>
<name>SCPB_STRA3</name>
<protein>
    <recommendedName>
        <fullName evidence="1">Segregation and condensation protein B</fullName>
    </recommendedName>
</protein>
<accession>Q7ZAL6</accession>
<organism>
    <name type="scientific">Streptococcus agalactiae serotype III (strain NEM316)</name>
    <dbReference type="NCBI Taxonomy" id="211110"/>
    <lineage>
        <taxon>Bacteria</taxon>
        <taxon>Bacillati</taxon>
        <taxon>Bacillota</taxon>
        <taxon>Bacilli</taxon>
        <taxon>Lactobacillales</taxon>
        <taxon>Streptococcaceae</taxon>
        <taxon>Streptococcus</taxon>
    </lineage>
</organism>
<gene>
    <name evidence="1" type="primary">scpB</name>
    <name type="ordered locus">gbs1643</name>
</gene>
<keyword id="KW-0131">Cell cycle</keyword>
<keyword id="KW-0132">Cell division</keyword>
<keyword id="KW-0159">Chromosome partition</keyword>
<keyword id="KW-0963">Cytoplasm</keyword>
<proteinExistence type="inferred from homology"/>
<dbReference type="EMBL" id="AL766852">
    <property type="protein sequence ID" value="CAD47302.1"/>
    <property type="molecule type" value="Genomic_DNA"/>
</dbReference>
<dbReference type="RefSeq" id="WP_000221690.1">
    <property type="nucleotide sequence ID" value="NC_004368.1"/>
</dbReference>
<dbReference type="SMR" id="Q7ZAL6"/>
<dbReference type="GeneID" id="66886440"/>
<dbReference type="KEGG" id="san:gbs1643"/>
<dbReference type="eggNOG" id="COG1386">
    <property type="taxonomic scope" value="Bacteria"/>
</dbReference>
<dbReference type="HOGENOM" id="CLU_045647_5_3_9"/>
<dbReference type="Proteomes" id="UP000000823">
    <property type="component" value="Chromosome"/>
</dbReference>
<dbReference type="GO" id="GO:0005737">
    <property type="term" value="C:cytoplasm"/>
    <property type="evidence" value="ECO:0007669"/>
    <property type="project" value="UniProtKB-SubCell"/>
</dbReference>
<dbReference type="GO" id="GO:0051301">
    <property type="term" value="P:cell division"/>
    <property type="evidence" value="ECO:0007669"/>
    <property type="project" value="UniProtKB-KW"/>
</dbReference>
<dbReference type="GO" id="GO:0051304">
    <property type="term" value="P:chromosome separation"/>
    <property type="evidence" value="ECO:0007669"/>
    <property type="project" value="InterPro"/>
</dbReference>
<dbReference type="GO" id="GO:0006260">
    <property type="term" value="P:DNA replication"/>
    <property type="evidence" value="ECO:0007669"/>
    <property type="project" value="UniProtKB-UniRule"/>
</dbReference>
<dbReference type="Gene3D" id="1.10.10.10">
    <property type="entry name" value="Winged helix-like DNA-binding domain superfamily/Winged helix DNA-binding domain"/>
    <property type="match status" value="2"/>
</dbReference>
<dbReference type="HAMAP" id="MF_01804">
    <property type="entry name" value="ScpB"/>
    <property type="match status" value="1"/>
</dbReference>
<dbReference type="InterPro" id="IPR005234">
    <property type="entry name" value="ScpB_csome_segregation"/>
</dbReference>
<dbReference type="InterPro" id="IPR036388">
    <property type="entry name" value="WH-like_DNA-bd_sf"/>
</dbReference>
<dbReference type="InterPro" id="IPR036390">
    <property type="entry name" value="WH_DNA-bd_sf"/>
</dbReference>
<dbReference type="NCBIfam" id="TIGR00281">
    <property type="entry name" value="SMC-Scp complex subunit ScpB"/>
    <property type="match status" value="1"/>
</dbReference>
<dbReference type="PANTHER" id="PTHR34298">
    <property type="entry name" value="SEGREGATION AND CONDENSATION PROTEIN B"/>
    <property type="match status" value="1"/>
</dbReference>
<dbReference type="PANTHER" id="PTHR34298:SF2">
    <property type="entry name" value="SEGREGATION AND CONDENSATION PROTEIN B"/>
    <property type="match status" value="1"/>
</dbReference>
<dbReference type="Pfam" id="PF04079">
    <property type="entry name" value="SMC_ScpB"/>
    <property type="match status" value="1"/>
</dbReference>
<dbReference type="PIRSF" id="PIRSF019345">
    <property type="entry name" value="ScpB"/>
    <property type="match status" value="1"/>
</dbReference>
<dbReference type="SUPFAM" id="SSF46785">
    <property type="entry name" value="Winged helix' DNA-binding domain"/>
    <property type="match status" value="2"/>
</dbReference>
<sequence>MTYLGSIEALLFVAGEDGLSLRQMAELLSLTPSALIQQLEKLAKRYEEDDDSSLLLLETAQTYKLVTKDSYMTLLRDYAKAPINQSLSRASLEVLSIIAYKQPITRIEIDDIRGVNSSGAITRLIAFGLIKEAGKKEVLGRPNLYETTNYFLDYMGINQLDDLIDASSIELVDEEVSLFSMDSINTEDKENNEN</sequence>
<comment type="function">
    <text evidence="1">Participates in chromosomal partition during cell division. May act via the formation of a condensin-like complex containing Smc and ScpA that pull DNA away from mid-cell into both cell halves.</text>
</comment>
<comment type="subunit">
    <text evidence="1">Homodimer. Homodimerization may be required to stabilize the binding of ScpA to the Smc head domains. Component of a cohesin-like complex composed of ScpA, ScpB and the Smc homodimer, in which ScpA and ScpB bind to the head domain of Smc. The presence of the three proteins is required for the association of the complex with DNA.</text>
</comment>
<comment type="subcellular location">
    <subcellularLocation>
        <location evidence="1">Cytoplasm</location>
    </subcellularLocation>
    <text evidence="1">Associated with two foci at the outer edges of the nucleoid region in young cells, and at four foci within both cell halves in older cells.</text>
</comment>
<comment type="similarity">
    <text evidence="1">Belongs to the ScpB family.</text>
</comment>
<feature type="chain" id="PRO_0000211155" description="Segregation and condensation protein B">
    <location>
        <begin position="1"/>
        <end position="194"/>
    </location>
</feature>
<evidence type="ECO:0000255" key="1">
    <source>
        <dbReference type="HAMAP-Rule" id="MF_01804"/>
    </source>
</evidence>